<dbReference type="EMBL" id="M16347">
    <property type="protein sequence ID" value="AAA42038.1"/>
    <property type="molecule type" value="mRNA"/>
</dbReference>
<dbReference type="EMBL" id="J02762">
    <property type="protein sequence ID" value="AAA41522.1"/>
    <property type="molecule type" value="mRNA"/>
</dbReference>
<dbReference type="EMBL" id="X07636">
    <property type="protein sequence ID" value="CAA30476.1"/>
    <property type="molecule type" value="mRNA"/>
</dbReference>
<dbReference type="EMBL" id="BC088099">
    <property type="protein sequence ID" value="AAH88099.1"/>
    <property type="molecule type" value="mRNA"/>
</dbReference>
<dbReference type="PIR" id="B28462">
    <property type="entry name" value="LNRT2"/>
</dbReference>
<dbReference type="RefSeq" id="NP_058885.1">
    <property type="nucleotide sequence ID" value="NM_017189.3"/>
</dbReference>
<dbReference type="RefSeq" id="XP_006246738.1">
    <property type="nucleotide sequence ID" value="XM_006246676.5"/>
</dbReference>
<dbReference type="SMR" id="P08290"/>
<dbReference type="FunCoup" id="P08290">
    <property type="interactions" value="48"/>
</dbReference>
<dbReference type="IntAct" id="P08290">
    <property type="interactions" value="1"/>
</dbReference>
<dbReference type="STRING" id="10116.ENSRNOP00000060474"/>
<dbReference type="GlyCosmos" id="P08290">
    <property type="glycosylation" value="3 sites, No reported glycans"/>
</dbReference>
<dbReference type="GlyGen" id="P08290">
    <property type="glycosylation" value="4 sites"/>
</dbReference>
<dbReference type="iPTMnet" id="P08290"/>
<dbReference type="PhosphoSitePlus" id="P08290"/>
<dbReference type="SwissPalm" id="P08290"/>
<dbReference type="PaxDb" id="10116-ENSRNOP00000060474"/>
<dbReference type="Ensembl" id="ENSRNOT00000065370.4">
    <property type="protein sequence ID" value="ENSRNOP00000060474.1"/>
    <property type="gene ID" value="ENSRNOG00000030726.7"/>
</dbReference>
<dbReference type="GeneID" id="29403"/>
<dbReference type="KEGG" id="rno:29403"/>
<dbReference type="UCSC" id="RGD:2161">
    <property type="organism name" value="rat"/>
</dbReference>
<dbReference type="AGR" id="RGD:2161"/>
<dbReference type="CTD" id="433"/>
<dbReference type="RGD" id="2161">
    <property type="gene designation" value="Asgr2"/>
</dbReference>
<dbReference type="eggNOG" id="KOG4297">
    <property type="taxonomic scope" value="Eukaryota"/>
</dbReference>
<dbReference type="GeneTree" id="ENSGT00940000162310"/>
<dbReference type="HOGENOM" id="CLU_049894_2_0_1"/>
<dbReference type="InParanoid" id="P08290"/>
<dbReference type="OMA" id="RTLTCQM"/>
<dbReference type="OrthoDB" id="2142683at2759"/>
<dbReference type="PhylomeDB" id="P08290"/>
<dbReference type="TreeFam" id="TF352155"/>
<dbReference type="Reactome" id="R-RNO-446203">
    <property type="pathway name" value="Asparagine N-linked glycosylation"/>
</dbReference>
<dbReference type="PRO" id="PR:P08290"/>
<dbReference type="Proteomes" id="UP000002494">
    <property type="component" value="Chromosome 10"/>
</dbReference>
<dbReference type="Bgee" id="ENSRNOG00000030726">
    <property type="expression patterns" value="Expressed in liver and 15 other cell types or tissues"/>
</dbReference>
<dbReference type="ExpressionAtlas" id="P08290">
    <property type="expression patterns" value="baseline and differential"/>
</dbReference>
<dbReference type="GO" id="GO:0044322">
    <property type="term" value="C:endoplasmic reticulum quality control compartment"/>
    <property type="evidence" value="ECO:0000266"/>
    <property type="project" value="RGD"/>
</dbReference>
<dbReference type="GO" id="GO:0009897">
    <property type="term" value="C:external side of plasma membrane"/>
    <property type="evidence" value="ECO:0000318"/>
    <property type="project" value="GO_Central"/>
</dbReference>
<dbReference type="GO" id="GO:0048471">
    <property type="term" value="C:perinuclear region of cytoplasm"/>
    <property type="evidence" value="ECO:0000266"/>
    <property type="project" value="RGD"/>
</dbReference>
<dbReference type="GO" id="GO:0005537">
    <property type="term" value="F:D-mannose binding"/>
    <property type="evidence" value="ECO:0000318"/>
    <property type="project" value="GO_Central"/>
</dbReference>
<dbReference type="GO" id="GO:0042806">
    <property type="term" value="F:fucose binding"/>
    <property type="evidence" value="ECO:0000318"/>
    <property type="project" value="GO_Central"/>
</dbReference>
<dbReference type="GO" id="GO:0038187">
    <property type="term" value="F:pattern recognition receptor activity"/>
    <property type="evidence" value="ECO:0000318"/>
    <property type="project" value="GO_Central"/>
</dbReference>
<dbReference type="GO" id="GO:0030282">
    <property type="term" value="P:bone mineralization"/>
    <property type="evidence" value="ECO:0000270"/>
    <property type="project" value="RGD"/>
</dbReference>
<dbReference type="GO" id="GO:0006897">
    <property type="term" value="P:endocytosis"/>
    <property type="evidence" value="ECO:0007669"/>
    <property type="project" value="UniProtKB-KW"/>
</dbReference>
<dbReference type="GO" id="GO:0009100">
    <property type="term" value="P:glycoprotein metabolic process"/>
    <property type="evidence" value="ECO:0000266"/>
    <property type="project" value="RGD"/>
</dbReference>
<dbReference type="GO" id="GO:0006955">
    <property type="term" value="P:immune response"/>
    <property type="evidence" value="ECO:0000318"/>
    <property type="project" value="GO_Central"/>
</dbReference>
<dbReference type="GO" id="GO:0055088">
    <property type="term" value="P:lipid homeostasis"/>
    <property type="evidence" value="ECO:0000266"/>
    <property type="project" value="RGD"/>
</dbReference>
<dbReference type="GO" id="GO:0031647">
    <property type="term" value="P:regulation of protein stability"/>
    <property type="evidence" value="ECO:0000266"/>
    <property type="project" value="RGD"/>
</dbReference>
<dbReference type="CDD" id="cd03590">
    <property type="entry name" value="CLECT_DC-SIGN_like"/>
    <property type="match status" value="1"/>
</dbReference>
<dbReference type="Gene3D" id="3.10.100.10">
    <property type="entry name" value="Mannose-Binding Protein A, subunit A"/>
    <property type="match status" value="1"/>
</dbReference>
<dbReference type="InterPro" id="IPR001304">
    <property type="entry name" value="C-type_lectin-like"/>
</dbReference>
<dbReference type="InterPro" id="IPR016186">
    <property type="entry name" value="C-type_lectin-like/link_sf"/>
</dbReference>
<dbReference type="InterPro" id="IPR050111">
    <property type="entry name" value="C-type_lectin/snaclec_domain"/>
</dbReference>
<dbReference type="InterPro" id="IPR018378">
    <property type="entry name" value="C-type_lectin_CS"/>
</dbReference>
<dbReference type="InterPro" id="IPR033989">
    <property type="entry name" value="CD209-like_CTLD"/>
</dbReference>
<dbReference type="InterPro" id="IPR016187">
    <property type="entry name" value="CTDL_fold"/>
</dbReference>
<dbReference type="PANTHER" id="PTHR22803">
    <property type="entry name" value="MANNOSE, PHOSPHOLIPASE, LECTIN RECEPTOR RELATED"/>
    <property type="match status" value="1"/>
</dbReference>
<dbReference type="Pfam" id="PF00059">
    <property type="entry name" value="Lectin_C"/>
    <property type="match status" value="1"/>
</dbReference>
<dbReference type="Pfam" id="PF03954">
    <property type="entry name" value="Lectin_N"/>
    <property type="match status" value="1"/>
</dbReference>
<dbReference type="SMART" id="SM00034">
    <property type="entry name" value="CLECT"/>
    <property type="match status" value="1"/>
</dbReference>
<dbReference type="SUPFAM" id="SSF56436">
    <property type="entry name" value="C-type lectin-like"/>
    <property type="match status" value="1"/>
</dbReference>
<dbReference type="PROSITE" id="PS00615">
    <property type="entry name" value="C_TYPE_LECTIN_1"/>
    <property type="match status" value="1"/>
</dbReference>
<dbReference type="PROSITE" id="PS50041">
    <property type="entry name" value="C_TYPE_LECTIN_2"/>
    <property type="match status" value="1"/>
</dbReference>
<comment type="function">
    <text>Mediates the endocytosis of plasma glycoproteins to which the terminal sialic acid residue on their complex carbohydrate moieties has been removed. The receptor recognizes terminal galactose and N-acetylgalactosamine units. After ligand binding to the receptor, the resulting complex is internalized and transported to a sorting organelle, where receptor and ligand are disassociated. The receptor then returns to the cell membrane surface.</text>
</comment>
<comment type="subunit">
    <text evidence="1">Interacts with LASS2.</text>
</comment>
<comment type="subcellular location">
    <subcellularLocation>
        <location>Membrane</location>
        <topology>Single-pass type II membrane protein</topology>
    </subcellularLocation>
</comment>
<comment type="tissue specificity">
    <text>Expressed exclusively in hepatic parenchymal cells.</text>
</comment>
<comment type="miscellaneous">
    <text>Calcium is required for ligand binding.</text>
</comment>
<comment type="miscellaneous">
    <text>Two types of rat hepatic lectin have been identified, RHL-1 and RHL-2/3, having a relative abundance of 4:1. RHL-2 and RHL-3 only differs in their carbohydrate structures.</text>
</comment>
<comment type="online information" name="Functional Glycomics Gateway - Glycan Binding">
    <link uri="http://www.functionalglycomics.org/glycomics/GBPServlet?&amp;operationType=view&amp;cbpId=cbp_rat_Ctlect_357"/>
    <text>Hepatic asialoglycoprotein receptor subunit 2/3</text>
</comment>
<feature type="chain" id="PRO_0000046656" description="Asialoglycoprotein receptor 2">
    <location>
        <begin position="1"/>
        <end position="301"/>
    </location>
</feature>
<feature type="topological domain" description="Cytoplasmic" evidence="2">
    <location>
        <begin position="1"/>
        <end position="58"/>
    </location>
</feature>
<feature type="transmembrane region" description="Helical; Signal-anchor for type II membrane protein" evidence="2">
    <location>
        <begin position="59"/>
        <end position="79"/>
    </location>
</feature>
<feature type="topological domain" description="Extracellular" evidence="2">
    <location>
        <begin position="80"/>
        <end position="301"/>
    </location>
</feature>
<feature type="domain" description="C-type lectin" evidence="3">
    <location>
        <begin position="169"/>
        <end position="295"/>
    </location>
</feature>
<feature type="region of interest" description="Disordered" evidence="4">
    <location>
        <begin position="1"/>
        <end position="29"/>
    </location>
</feature>
<feature type="modified residue" description="Phosphoserine" evidence="7">
    <location>
        <position position="13"/>
    </location>
</feature>
<feature type="lipid moiety-binding region" description="S-palmitoyl cysteine" evidence="5">
    <location>
        <position position="54"/>
    </location>
</feature>
<feature type="glycosylation site" description="N-linked (GlcNAc...) asparagine">
    <location>
        <position position="97"/>
    </location>
</feature>
<feature type="glycosylation site" description="N-linked (GlcNAc...) asparagine">
    <location>
        <position position="119"/>
    </location>
</feature>
<feature type="glycosylation site" description="N-linked (GlcNAc...) asparagine">
    <location>
        <position position="165"/>
    </location>
</feature>
<feature type="disulfide bond" evidence="3">
    <location>
        <begin position="170"/>
        <end position="181"/>
    </location>
</feature>
<feature type="disulfide bond" evidence="3">
    <location>
        <begin position="198"/>
        <end position="293"/>
    </location>
</feature>
<feature type="disulfide bond" evidence="3">
    <location>
        <begin position="271"/>
        <end position="285"/>
    </location>
</feature>
<feature type="sequence conflict" description="In Ref. 1; AAA42038." evidence="6" ref="1">
    <original>R</original>
    <variation>A</variation>
    <location>
        <position position="153"/>
    </location>
</feature>
<feature type="sequence conflict" description="In Ref. 1; AAA42038." evidence="6" ref="1">
    <original>N</original>
    <variation>I</variation>
    <location>
        <position position="202"/>
    </location>
</feature>
<feature type="sequence conflict" description="In Ref. 1; AAA42038 and 5; AA sequence." evidence="6" ref="1 5">
    <original>W</original>
    <variation>C</variation>
    <location>
        <position position="260"/>
    </location>
</feature>
<feature type="sequence conflict" description="In Ref. 5; AA sequence." evidence="6" ref="5">
    <original>DN</original>
    <variation>ND</variation>
    <location>
        <begin position="282"/>
        <end position="283"/>
    </location>
</feature>
<reference key="1">
    <citation type="journal article" date="1987" name="Mol. Cell. Biol.">
        <title>Identification and characterization of cDNA clones encoding two homologous proteins that are part of the asialoglycoprotein receptor.</title>
        <authorList>
            <person name="McPhaul M."/>
            <person name="Berg P."/>
        </authorList>
    </citation>
    <scope>NUCLEOTIDE SEQUENCE [MRNA]</scope>
</reference>
<reference key="2">
    <citation type="journal article" date="1987" name="J. Biol. Chem.">
        <title>Major and minor forms of the rat liver asialoglycoprotein receptor are independent galactose-binding proteins. Primary structure and glycosylation heterogeneity of minor receptor forms.</title>
        <authorList>
            <person name="Halberg D.F."/>
            <person name="Wager R.E."/>
            <person name="Farrell D.C."/>
            <person name="Hildreth J."/>
            <person name="Quesenberry M.S."/>
            <person name="Loeb J.A."/>
            <person name="Holland E.C."/>
            <person name="Drickamer K."/>
        </authorList>
    </citation>
    <scope>NUCLEOTIDE SEQUENCE [MRNA]</scope>
</reference>
<reference key="3">
    <citation type="journal article" date="1988" name="DNA">
        <title>Asialoglycoprotein receptor genes are linked on chromosome 11 in the mouse.</title>
        <authorList>
            <person name="Sanford J.P."/>
            <person name="Elliott R.W."/>
            <person name="Doyle D."/>
        </authorList>
    </citation>
    <scope>NUCLEOTIDE SEQUENCE [MRNA]</scope>
    <source>
        <strain>Sprague-Dawley</strain>
        <tissue>Liver</tissue>
    </source>
</reference>
<reference key="4">
    <citation type="journal article" date="2004" name="Genome Res.">
        <title>The status, quality, and expansion of the NIH full-length cDNA project: the Mammalian Gene Collection (MGC).</title>
        <authorList>
            <consortium name="The MGC Project Team"/>
        </authorList>
    </citation>
    <scope>NUCLEOTIDE SEQUENCE [LARGE SCALE MRNA]</scope>
    <source>
        <tissue>Liver</tissue>
    </source>
</reference>
<reference key="5">
    <citation type="journal article" date="1984" name="J. Biol. Chem.">
        <title>Primary structure of the rat liver asialoglycoprotein receptor. Structural evidence for multiple polypeptide species.</title>
        <authorList>
            <person name="Drickamer K."/>
            <person name="Mamon J.F."/>
            <person name="Binns G."/>
            <person name="Leung J.O."/>
        </authorList>
    </citation>
    <scope>PROTEIN SEQUENCE OF 201-301</scope>
</reference>
<reference key="6">
    <citation type="journal article" date="1996" name="J. Biol. Chem.">
        <title>Fatty acylation of the rat and human asialoglycoprotein receptors. A conserved cytoplasmic cysteine residue is acylated in all receptor subunits.</title>
        <authorList>
            <person name="Zeng F.Y."/>
            <person name="Weigel P.H."/>
        </authorList>
    </citation>
    <scope>PALMITOYLATION AT CYS-54</scope>
</reference>
<reference key="7">
    <citation type="journal article" date="2012" name="Nat. Commun.">
        <title>Quantitative maps of protein phosphorylation sites across 14 different rat organs and tissues.</title>
        <authorList>
            <person name="Lundby A."/>
            <person name="Secher A."/>
            <person name="Lage K."/>
            <person name="Nordsborg N.B."/>
            <person name="Dmytriyev A."/>
            <person name="Lundby C."/>
            <person name="Olsen J.V."/>
        </authorList>
    </citation>
    <scope>PHOSPHORYLATION [LARGE SCALE ANALYSIS] AT SER-13</scope>
    <scope>IDENTIFICATION BY MASS SPECTROMETRY [LARGE SCALE ANALYSIS]</scope>
</reference>
<name>ASGR2_RAT</name>
<proteinExistence type="evidence at protein level"/>
<keyword id="KW-0106">Calcium</keyword>
<keyword id="KW-0903">Direct protein sequencing</keyword>
<keyword id="KW-1015">Disulfide bond</keyword>
<keyword id="KW-0254">Endocytosis</keyword>
<keyword id="KW-0325">Glycoprotein</keyword>
<keyword id="KW-0430">Lectin</keyword>
<keyword id="KW-0449">Lipoprotein</keyword>
<keyword id="KW-0472">Membrane</keyword>
<keyword id="KW-0564">Palmitate</keyword>
<keyword id="KW-0597">Phosphoprotein</keyword>
<keyword id="KW-0675">Receptor</keyword>
<keyword id="KW-1185">Reference proteome</keyword>
<keyword id="KW-0735">Signal-anchor</keyword>
<keyword id="KW-0812">Transmembrane</keyword>
<keyword id="KW-1133">Transmembrane helix</keyword>
<organism>
    <name type="scientific">Rattus norvegicus</name>
    <name type="common">Rat</name>
    <dbReference type="NCBI Taxonomy" id="10116"/>
    <lineage>
        <taxon>Eukaryota</taxon>
        <taxon>Metazoa</taxon>
        <taxon>Chordata</taxon>
        <taxon>Craniata</taxon>
        <taxon>Vertebrata</taxon>
        <taxon>Euteleostomi</taxon>
        <taxon>Mammalia</taxon>
        <taxon>Eutheria</taxon>
        <taxon>Euarchontoglires</taxon>
        <taxon>Glires</taxon>
        <taxon>Rodentia</taxon>
        <taxon>Myomorpha</taxon>
        <taxon>Muroidea</taxon>
        <taxon>Muridae</taxon>
        <taxon>Murinae</taxon>
        <taxon>Rattus</taxon>
    </lineage>
</organism>
<sequence length="301" mass="35027">MEKDFQDIQQLDSEENDHQLIGDEEQGSHVQNLRTENPRWGGQPPSRPFPQRLCSKFRLSLLALAFNILLLVVICVVSSQSMQLQKEFWTLKETLSNFSTTTLMEFKALDSHGGSRNDNLTSWETILEKKQKDIKADHSTLLFHLKHFPLDLRTLTCQLAFFLSNGTECCPVNWVEFGGSCYWFSRDGLTWAEADQYCQMENAHLLVINSREEQEFVVKHRGAFHIWIGLTDKDGSWKWVDGTEYRSNFKNWAFTQPDNWQGHEEGGSEDCAEILSDGLWNDNFCQQVNRWACERKRDITY</sequence>
<gene>
    <name type="primary">Asgr2</name>
    <name type="synonym">Asgr-2</name>
</gene>
<accession>P08290</accession>
<accession>Q5M8C9</accession>
<protein>
    <recommendedName>
        <fullName>Asialoglycoprotein receptor 2</fullName>
        <shortName>ASGP-R 2</shortName>
        <shortName>ASGPR 2</shortName>
    </recommendedName>
    <alternativeName>
        <fullName>Hepatic lectin R2/3</fullName>
        <shortName>HL-2</shortName>
        <shortName>rHL-2</shortName>
    </alternativeName>
</protein>
<evidence type="ECO:0000250" key="1"/>
<evidence type="ECO:0000255" key="2"/>
<evidence type="ECO:0000255" key="3">
    <source>
        <dbReference type="PROSITE-ProRule" id="PRU00040"/>
    </source>
</evidence>
<evidence type="ECO:0000256" key="4">
    <source>
        <dbReference type="SAM" id="MobiDB-lite"/>
    </source>
</evidence>
<evidence type="ECO:0000269" key="5">
    <source>
    </source>
</evidence>
<evidence type="ECO:0000305" key="6"/>
<evidence type="ECO:0007744" key="7">
    <source>
    </source>
</evidence>